<keyword id="KW-0089">Bile pigment</keyword>
<keyword id="KW-0150">Chloroplast</keyword>
<keyword id="KW-0157">Chromophore</keyword>
<keyword id="KW-0903">Direct protein sequencing</keyword>
<keyword id="KW-0249">Electron transport</keyword>
<keyword id="KW-0472">Membrane</keyword>
<keyword id="KW-0602">Photosynthesis</keyword>
<keyword id="KW-0934">Plastid</keyword>
<keyword id="KW-0793">Thylakoid</keyword>
<keyword id="KW-0813">Transport</keyword>
<reference key="1">
    <citation type="journal article" date="1990" name="Biol. Chem. Hoppe-Seyler">
        <title>The complete amino-acid sequence and the phylogenetic origin of phycocyanin-645 from the cryptophytan alga Chroomonas sp.</title>
        <authorList>
            <person name="Sidler W."/>
            <person name="Nutt H."/>
            <person name="Kumpf B."/>
            <person name="Frank G."/>
            <person name="Suter F."/>
            <person name="Brenzel A."/>
            <person name="Wehrmeyer W."/>
            <person name="Zuber H."/>
        </authorList>
    </citation>
    <scope>PROTEIN SEQUENCE</scope>
    <scope>CHROMOPHORE BINDING AT CYS-50; CYS-61; CYS-82 AND CYS-158</scope>
</reference>
<reference key="2">
    <citation type="journal article" date="1985" name="Biol. Chem. Hoppe-Seyler">
        <title>Structural studies on cryptomonad biliprotein subunits. Two different alpha-subunits in Chroomonas phycocyanin-645 and Cryptomonas phycoerythrin-545.</title>
        <authorList>
            <person name="Sidler W."/>
            <person name="Kumpf B."/>
            <person name="Suter F."/>
            <person name="Morisset W."/>
            <person name="Wehrmeyer W."/>
            <person name="Zuber H."/>
        </authorList>
    </citation>
    <scope>PROTEIN SEQUENCE OF 1-43</scope>
</reference>
<feature type="chain" id="PRO_0000199208" description="Phycocyanin-645 beta chain">
    <location>
        <begin position="1"/>
        <end position="177"/>
    </location>
</feature>
<feature type="binding site" evidence="1">
    <location>
        <position position="18"/>
    </location>
    <ligand>
        <name>mesobiliverdin</name>
        <dbReference type="ChEBI" id="CHEBI:189061"/>
        <note>ligand shared with alpha subunit</note>
    </ligand>
</feature>
<feature type="binding site" evidence="1">
    <location>
        <position position="28"/>
    </location>
    <ligand>
        <name>(2R,3E)-phycocyanobilin</name>
        <dbReference type="ChEBI" id="CHEBI:85275"/>
        <label>1</label>
        <note>ligand shared with alpha subunit</note>
    </ligand>
</feature>
<feature type="binding site" evidence="1">
    <location>
        <position position="35"/>
    </location>
    <ligand>
        <name>(2R,3E)-phycocyanobilin</name>
        <dbReference type="ChEBI" id="CHEBI:85275"/>
        <label>1</label>
        <note>ligand shared with alpha subunit</note>
    </ligand>
</feature>
<feature type="binding site" evidence="1">
    <location>
        <position position="39"/>
    </location>
    <ligand>
        <name>(2R,3E)-phycocyanobilin</name>
        <dbReference type="ChEBI" id="CHEBI:85275"/>
        <label>1</label>
        <note>ligand shared with alpha subunit</note>
    </ligand>
</feature>
<feature type="binding site" description="covalent" evidence="1">
    <location>
        <position position="50"/>
    </location>
    <ligand>
        <name>15,16-dihydrobiliverdin</name>
        <dbReference type="ChEBI" id="CHEBI:57899"/>
        <note>ligand shared with alpha subunit</note>
    </ligand>
</feature>
<feature type="binding site" evidence="1">
    <location>
        <position position="54"/>
    </location>
    <ligand>
        <name>15,16-dihydrobiliverdin</name>
        <dbReference type="ChEBI" id="CHEBI:57899"/>
        <note>ligand shared with alpha subunit</note>
    </ligand>
</feature>
<feature type="binding site" description="covalent" evidence="1">
    <location>
        <position position="61"/>
    </location>
    <ligand>
        <name>15,16-dihydrobiliverdin</name>
        <dbReference type="ChEBI" id="CHEBI:57899"/>
        <note>ligand shared with alpha subunit</note>
    </ligand>
</feature>
<feature type="binding site" evidence="1">
    <location>
        <position position="77"/>
    </location>
    <ligand>
        <name>(2R,3E)-phycocyanobilin</name>
        <dbReference type="ChEBI" id="CHEBI:85275"/>
        <label>2</label>
        <note>ligand shared with alpha subunit</note>
    </ligand>
</feature>
<feature type="binding site" description="covalent" evidence="1">
    <location>
        <position position="82"/>
    </location>
    <ligand>
        <name>(2R,3E)-phycocyanobilin</name>
        <dbReference type="ChEBI" id="CHEBI:85275"/>
        <label>2</label>
        <note>ligand shared with alpha subunit</note>
    </ligand>
</feature>
<feature type="binding site" evidence="1">
    <location>
        <position position="84"/>
    </location>
    <ligand>
        <name>(2R,3E)-phycocyanobilin</name>
        <dbReference type="ChEBI" id="CHEBI:85275"/>
        <label>2</label>
        <note>ligand shared with alpha subunit</note>
    </ligand>
</feature>
<feature type="binding site" evidence="1">
    <location>
        <position position="85"/>
    </location>
    <ligand>
        <name>(2R,3E)-phycocyanobilin</name>
        <dbReference type="ChEBI" id="CHEBI:85275"/>
        <label>2</label>
        <note>ligand shared with alpha subunit</note>
    </ligand>
</feature>
<feature type="binding site" evidence="1">
    <location>
        <position position="148"/>
    </location>
    <ligand>
        <name>15,16-dihydrobiliverdin</name>
        <dbReference type="ChEBI" id="CHEBI:57899"/>
        <note>ligand shared with alpha subunit</note>
    </ligand>
</feature>
<feature type="binding site" evidence="1">
    <location>
        <position position="154"/>
    </location>
    <ligand>
        <name>(2R,3E)-phycocyanobilin</name>
        <dbReference type="ChEBI" id="CHEBI:85275"/>
        <label>1</label>
        <note>ligand shared with alpha subunit</note>
    </ligand>
</feature>
<feature type="binding site" evidence="1">
    <location>
        <position position="156"/>
    </location>
    <ligand>
        <name>(2R,3E)-phycocyanobilin</name>
        <dbReference type="ChEBI" id="CHEBI:85275"/>
        <label>1</label>
        <note>ligand shared with alpha subunit</note>
    </ligand>
</feature>
<feature type="binding site" description="covalent" evidence="1">
    <location>
        <position position="158"/>
    </location>
    <ligand>
        <name>(2R,3E)-phycocyanobilin</name>
        <dbReference type="ChEBI" id="CHEBI:85275"/>
        <label>1</label>
        <note>ligand shared with alpha subunit</note>
    </ligand>
</feature>
<dbReference type="PIR" id="S10604">
    <property type="entry name" value="E22102"/>
</dbReference>
<dbReference type="SMR" id="P23817"/>
<dbReference type="GO" id="GO:0009535">
    <property type="term" value="C:chloroplast thylakoid membrane"/>
    <property type="evidence" value="ECO:0007669"/>
    <property type="project" value="UniProtKB-SubCell"/>
</dbReference>
<dbReference type="GO" id="GO:0030089">
    <property type="term" value="C:phycobilisome"/>
    <property type="evidence" value="ECO:0007669"/>
    <property type="project" value="InterPro"/>
</dbReference>
<dbReference type="GO" id="GO:0015979">
    <property type="term" value="P:photosynthesis"/>
    <property type="evidence" value="ECO:0007669"/>
    <property type="project" value="UniProtKB-KW"/>
</dbReference>
<dbReference type="CDD" id="cd14767">
    <property type="entry name" value="PE_beta-like"/>
    <property type="match status" value="1"/>
</dbReference>
<dbReference type="Gene3D" id="1.10.490.20">
    <property type="entry name" value="Phycocyanins"/>
    <property type="match status" value="1"/>
</dbReference>
<dbReference type="InterPro" id="IPR009050">
    <property type="entry name" value="Globin-like_sf"/>
</dbReference>
<dbReference type="InterPro" id="IPR012128">
    <property type="entry name" value="Phycobilisome_asu/bsu"/>
</dbReference>
<dbReference type="InterPro" id="IPR038719">
    <property type="entry name" value="Phycobilisome_asu/bsu_sf"/>
</dbReference>
<dbReference type="PANTHER" id="PTHR34011:SF7">
    <property type="entry name" value="C-PHYCOCYANIN BETA SUBUNIT"/>
    <property type="match status" value="1"/>
</dbReference>
<dbReference type="PANTHER" id="PTHR34011">
    <property type="entry name" value="PHYCOBILISOME 32.1 KDA LINKER POLYPEPTIDE, PHYCOCYANIN-ASSOCIATED, ROD 2-RELATED"/>
    <property type="match status" value="1"/>
</dbReference>
<dbReference type="Pfam" id="PF00502">
    <property type="entry name" value="Phycobilisome"/>
    <property type="match status" value="1"/>
</dbReference>
<dbReference type="PIRSF" id="PIRSF000081">
    <property type="entry name" value="Phycocyanin"/>
    <property type="match status" value="1"/>
</dbReference>
<dbReference type="SUPFAM" id="SSF46458">
    <property type="entry name" value="Globin-like"/>
    <property type="match status" value="1"/>
</dbReference>
<name>PHEB_CHRSP</name>
<organism>
    <name type="scientific">Chroomonas sp</name>
    <dbReference type="NCBI Taxonomy" id="3029"/>
    <lineage>
        <taxon>Eukaryota</taxon>
        <taxon>Cryptophyceae</taxon>
        <taxon>Pyrenomonadales</taxon>
        <taxon>Chroomonadaceae</taxon>
        <taxon>Chroomonas</taxon>
    </lineage>
</organism>
<proteinExistence type="evidence at protein level"/>
<comment type="function">
    <text evidence="2">Light-harvesting photosynthetic tetrapyrrole chromophore-protein from the phycobiliprotein complex.</text>
</comment>
<comment type="subunit">
    <text evidence="1">Heterotetramer of 2 different alpha chains and 2 identical beta chains which form 2 alpha-beta heterodimers within the heterotetramer.</text>
</comment>
<comment type="subcellular location">
    <subcellularLocation>
        <location evidence="2">Plastid</location>
        <location evidence="2">Chloroplast thylakoid membrane</location>
        <topology evidence="2">Peripheral membrane protein</topology>
        <orientation evidence="2">Lumenal side</orientation>
    </subcellularLocation>
</comment>
<comment type="PTM">
    <text evidence="1">Contains two phycocyanobilin chromophores, one mesobiliverdin chromophore and one 15,16-dihydrobiliverdin chromophore with binding mediated by both the alpha and beta subunits.</text>
</comment>
<comment type="miscellaneous">
    <text>The light-harvesting system in Cryptophytes contains phycobiliprotein complexes. Unusually they are composed of either phycoerythrin (CPE) or phycocyanin (CPC) but never allophycocyanin (APC), with only one type of biliprotein being present in any one species. Unlike cyanobacteria or red algae these proteins are not arranged into higher-order phycobilisome complexes, and they are found in the thylakoid lumen.</text>
</comment>
<comment type="similarity">
    <text evidence="2">Belongs to the phycobiliprotein family.</text>
</comment>
<evidence type="ECO:0000250" key="1">
    <source>
        <dbReference type="UniProtKB" id="U5T8F2"/>
    </source>
</evidence>
<evidence type="ECO:0000305" key="2"/>
<protein>
    <recommendedName>
        <fullName>Phycocyanin-645 beta chain</fullName>
        <shortName>PC-645</shortName>
    </recommendedName>
</protein>
<sequence length="177" mass="18388">MLDAFSRVVTGADSKAAYVGGADLQALKKFVSEGNKRLDAVNAIVSNASCIVSDAVSGMICENPSLISPSGECYTNRRMAACLRDAEIILRYVSYSLLSGDSSVLEDRCLSGLKETYASLGVPAAGNARAVGIMKATVVAFINNTSNQKKLLTPSGDCSALASEAAGYFDKVTSALA</sequence>
<accession>P23817</accession>